<organism>
    <name type="scientific">Mus musculus</name>
    <name type="common">Mouse</name>
    <dbReference type="NCBI Taxonomy" id="10090"/>
    <lineage>
        <taxon>Eukaryota</taxon>
        <taxon>Metazoa</taxon>
        <taxon>Chordata</taxon>
        <taxon>Craniata</taxon>
        <taxon>Vertebrata</taxon>
        <taxon>Euteleostomi</taxon>
        <taxon>Mammalia</taxon>
        <taxon>Eutheria</taxon>
        <taxon>Euarchontoglires</taxon>
        <taxon>Glires</taxon>
        <taxon>Rodentia</taxon>
        <taxon>Myomorpha</taxon>
        <taxon>Muroidea</taxon>
        <taxon>Muridae</taxon>
        <taxon>Murinae</taxon>
        <taxon>Mus</taxon>
        <taxon>Mus</taxon>
    </lineage>
</organism>
<feature type="chain" id="PRO_0000392209" description="Nesprin-1">
    <location>
        <begin position="1"/>
        <end position="8799"/>
    </location>
</feature>
<feature type="topological domain" description="Cytoplasmic" evidence="6">
    <location>
        <begin position="1"/>
        <end position="8748"/>
    </location>
</feature>
<feature type="transmembrane region" description="Helical; Anchor for type IV membrane protein" evidence="6">
    <location>
        <begin position="8749"/>
        <end position="8769"/>
    </location>
</feature>
<feature type="topological domain" description="Perinuclear space" evidence="6">
    <location>
        <begin position="8770"/>
        <end position="8799"/>
    </location>
</feature>
<feature type="domain" description="Calponin-homology (CH) 1" evidence="5">
    <location>
        <begin position="27"/>
        <end position="134"/>
    </location>
</feature>
<feature type="domain" description="Calponin-homology (CH) 2" evidence="5">
    <location>
        <begin position="178"/>
        <end position="283"/>
    </location>
</feature>
<feature type="repeat" description="Spectrin 1">
    <location>
        <begin position="314"/>
        <end position="397"/>
    </location>
</feature>
<feature type="repeat" description="Spectrin 2">
    <location>
        <begin position="398"/>
        <end position="502"/>
    </location>
</feature>
<feature type="repeat" description="Spectrin 3">
    <location>
        <begin position="503"/>
        <end position="609"/>
    </location>
</feature>
<feature type="repeat" description="Spectrin 4">
    <location>
        <begin position="610"/>
        <end position="703"/>
    </location>
</feature>
<feature type="repeat" description="Spectrin 5">
    <location>
        <begin position="704"/>
        <end position="815"/>
    </location>
</feature>
<feature type="repeat" description="Spectrin 6">
    <location>
        <begin position="816"/>
        <end position="923"/>
    </location>
</feature>
<feature type="repeat" description="Spectrin 7">
    <location>
        <begin position="924"/>
        <end position="1024"/>
    </location>
</feature>
<feature type="repeat" description="Spectrin 8">
    <location>
        <begin position="1025"/>
        <end position="1122"/>
    </location>
</feature>
<feature type="repeat" description="Spectrin 9">
    <location>
        <begin position="1123"/>
        <end position="1246"/>
    </location>
</feature>
<feature type="repeat" description="Spectrin 10">
    <location>
        <begin position="1247"/>
        <end position="1333"/>
    </location>
</feature>
<feature type="repeat" description="Spectrin 11">
    <location>
        <begin position="1334"/>
        <end position="1442"/>
    </location>
</feature>
<feature type="repeat" description="Spectrin 12">
    <location>
        <begin position="1443"/>
        <end position="1548"/>
    </location>
</feature>
<feature type="repeat" description="Spectrin 13">
    <location>
        <begin position="1549"/>
        <end position="1651"/>
    </location>
</feature>
<feature type="repeat" description="Spectrin 14">
    <location>
        <begin position="1652"/>
        <end position="1761"/>
    </location>
</feature>
<feature type="repeat" description="Spectrin 15">
    <location>
        <begin position="1762"/>
        <end position="1877"/>
    </location>
</feature>
<feature type="repeat" description="Spectrin 16">
    <location>
        <begin position="1878"/>
        <end position="1974"/>
    </location>
</feature>
<feature type="repeat" description="Spectrin 17">
    <location>
        <begin position="1975"/>
        <end position="2079"/>
    </location>
</feature>
<feature type="repeat" description="Spectrin 18">
    <location>
        <begin position="2080"/>
        <end position="2193"/>
    </location>
</feature>
<feature type="repeat" description="Spectrin 19">
    <location>
        <begin position="2194"/>
        <end position="2301"/>
    </location>
</feature>
<feature type="repeat" description="Spectrin 20">
    <location>
        <begin position="2302"/>
        <end position="2399"/>
    </location>
</feature>
<feature type="repeat" description="Spectrin 21">
    <location>
        <begin position="2400"/>
        <end position="2511"/>
    </location>
</feature>
<feature type="repeat" description="Spectrin 22">
    <location>
        <begin position="2512"/>
        <end position="2617"/>
    </location>
</feature>
<feature type="repeat" description="Spectrin 23">
    <location>
        <begin position="2618"/>
        <end position="2729"/>
    </location>
</feature>
<feature type="repeat" description="Spectrin 24">
    <location>
        <begin position="2730"/>
        <end position="2836"/>
    </location>
</feature>
<feature type="repeat" description="Spectrin 25">
    <location>
        <begin position="2837"/>
        <end position="2960"/>
    </location>
</feature>
<feature type="repeat" description="Spectrin 26">
    <location>
        <begin position="2961"/>
        <end position="3060"/>
    </location>
</feature>
<feature type="repeat" description="Spectrin 27">
    <location>
        <begin position="3061"/>
        <end position="3169"/>
    </location>
</feature>
<feature type="repeat" description="Spectrin 28">
    <location>
        <begin position="3170"/>
        <end position="3273"/>
    </location>
</feature>
<feature type="repeat" description="Spectrin 29">
    <location>
        <begin position="3274"/>
        <end position="3385"/>
    </location>
</feature>
<feature type="repeat" description="Spectrin 30">
    <location>
        <begin position="3386"/>
        <end position="3488"/>
    </location>
</feature>
<feature type="repeat" description="Spectrin 31">
    <location>
        <begin position="3489"/>
        <end position="3591"/>
    </location>
</feature>
<feature type="repeat" description="Spectrin 32">
    <location>
        <begin position="3592"/>
        <end position="3718"/>
    </location>
</feature>
<feature type="repeat" description="Spectrin 33">
    <location>
        <begin position="3719"/>
        <end position="3812"/>
    </location>
</feature>
<feature type="repeat" description="Spectrin 34">
    <location>
        <begin position="3813"/>
        <end position="3918"/>
    </location>
</feature>
<feature type="repeat" description="Spectrin 35">
    <location>
        <begin position="3919"/>
        <end position="4026"/>
    </location>
</feature>
<feature type="repeat" description="Spectrin 36">
    <location>
        <begin position="4027"/>
        <end position="4137"/>
    </location>
</feature>
<feature type="repeat" description="Spectrin 37">
    <location>
        <begin position="4138"/>
        <end position="4233"/>
    </location>
</feature>
<feature type="repeat" description="Spectrin 38">
    <location>
        <begin position="4234"/>
        <end position="4337"/>
    </location>
</feature>
<feature type="repeat" description="Spectrin 39">
    <location>
        <begin position="4338"/>
        <end position="4449"/>
    </location>
</feature>
<feature type="repeat" description="Spectrin 40">
    <location>
        <begin position="4450"/>
        <end position="4558"/>
    </location>
</feature>
<feature type="repeat" description="Spectrin 41">
    <location>
        <begin position="4559"/>
        <end position="4667"/>
    </location>
</feature>
<feature type="repeat" description="Spectrin 42">
    <location>
        <begin position="4668"/>
        <end position="4774"/>
    </location>
</feature>
<feature type="repeat" description="Spectrin 43">
    <location>
        <begin position="4775"/>
        <end position="4880"/>
    </location>
</feature>
<feature type="repeat" description="Spectrin 44">
    <location>
        <begin position="4881"/>
        <end position="4989"/>
    </location>
</feature>
<feature type="repeat" description="Spectrin 45">
    <location>
        <begin position="4990"/>
        <end position="5097"/>
    </location>
</feature>
<feature type="repeat" description="Spectrin 46">
    <location>
        <begin position="5098"/>
        <end position="5207"/>
    </location>
</feature>
<feature type="repeat" description="Spectrin 47">
    <location>
        <begin position="5208"/>
        <end position="5316"/>
    </location>
</feature>
<feature type="repeat" description="Spectrin 48">
    <location>
        <begin position="5317"/>
        <end position="5422"/>
    </location>
</feature>
<feature type="repeat" description="Spectrin 49">
    <location>
        <begin position="5423"/>
        <end position="5520"/>
    </location>
</feature>
<feature type="repeat" description="Spectrin 50">
    <location>
        <begin position="5521"/>
        <end position="5628"/>
    </location>
</feature>
<feature type="repeat" description="Spectrin 51">
    <location>
        <begin position="5629"/>
        <end position="5745"/>
    </location>
</feature>
<feature type="repeat" description="Spectrin 52">
    <location>
        <begin position="5746"/>
        <end position="5851"/>
    </location>
</feature>
<feature type="repeat" description="Spectrin 53">
    <location>
        <begin position="5971"/>
        <end position="6080"/>
    </location>
</feature>
<feature type="repeat" description="Spectrin 54">
    <location>
        <begin position="6081"/>
        <end position="6187"/>
    </location>
</feature>
<feature type="repeat" description="Spectrin 55">
    <location>
        <begin position="6377"/>
        <end position="6488"/>
    </location>
</feature>
<feature type="repeat" description="Spectrin 56">
    <location>
        <begin position="6489"/>
        <end position="6584"/>
    </location>
</feature>
<feature type="repeat" description="Spectrin 57">
    <location>
        <begin position="6585"/>
        <end position="6694"/>
    </location>
</feature>
<feature type="repeat" description="Spectrin 58">
    <location>
        <begin position="6695"/>
        <end position="6798"/>
    </location>
</feature>
<feature type="repeat" description="Spectrin 59">
    <location>
        <begin position="6799"/>
        <end position="6905"/>
    </location>
</feature>
<feature type="repeat" description="Spectrin 60">
    <location>
        <begin position="6906"/>
        <end position="7023"/>
    </location>
</feature>
<feature type="repeat" description="Spectrin 61">
    <location>
        <begin position="7024"/>
        <end position="7131"/>
    </location>
</feature>
<feature type="repeat" description="Spectrin 62">
    <location>
        <begin position="7132"/>
        <end position="7240"/>
    </location>
</feature>
<feature type="repeat" description="Spectrin 63">
    <location>
        <begin position="7241"/>
        <end position="7353"/>
    </location>
</feature>
<feature type="repeat" description="Spectrin 64">
    <location>
        <begin position="7354"/>
        <end position="7457"/>
    </location>
</feature>
<feature type="repeat" description="Spectrin 65">
    <location>
        <begin position="7458"/>
        <end position="7561"/>
    </location>
</feature>
<feature type="repeat" description="Spectrin 66">
    <location>
        <begin position="7562"/>
        <end position="7674"/>
    </location>
</feature>
<feature type="repeat" description="Spectrin 67">
    <location>
        <begin position="7675"/>
        <end position="7786"/>
    </location>
</feature>
<feature type="repeat" description="Spectrin 68">
    <location>
        <begin position="7787"/>
        <end position="7886"/>
    </location>
</feature>
<feature type="repeat" description="Spectrin 69">
    <location>
        <begin position="7887"/>
        <end position="8000"/>
    </location>
</feature>
<feature type="repeat" description="Spectrin 70">
    <location>
        <begin position="8001"/>
        <end position="8109"/>
    </location>
</feature>
<feature type="repeat" description="Spectrin 71">
    <location>
        <begin position="8110"/>
        <end position="8221"/>
    </location>
</feature>
<feature type="repeat" description="Spectrin 72">
    <location>
        <begin position="8332"/>
        <end position="8440"/>
    </location>
</feature>
<feature type="repeat" description="Spectrin 73">
    <location>
        <begin position="8441"/>
        <end position="8550"/>
    </location>
</feature>
<feature type="repeat" description="Spectrin 74">
    <location>
        <begin position="8551"/>
        <end position="8668"/>
    </location>
</feature>
<feature type="domain" description="KASH" evidence="6">
    <location>
        <begin position="8740"/>
        <end position="8799"/>
    </location>
</feature>
<feature type="region of interest" description="Actin-binding">
    <location>
        <begin position="1"/>
        <end position="289"/>
    </location>
</feature>
<feature type="region of interest" description="Disordered" evidence="7">
    <location>
        <begin position="1288"/>
        <end position="1310"/>
    </location>
</feature>
<feature type="region of interest" description="Disordered" evidence="7">
    <location>
        <begin position="5868"/>
        <end position="5894"/>
    </location>
</feature>
<feature type="region of interest" description="Disordered" evidence="7">
    <location>
        <begin position="8237"/>
        <end position="8287"/>
    </location>
</feature>
<feature type="region of interest" description="Disordered" evidence="7">
    <location>
        <begin position="8673"/>
        <end position="8735"/>
    </location>
</feature>
<feature type="coiled-coil region" evidence="4">
    <location>
        <begin position="314"/>
        <end position="8666"/>
    </location>
</feature>
<feature type="compositionally biased region" description="Low complexity" evidence="7">
    <location>
        <begin position="8257"/>
        <end position="8269"/>
    </location>
</feature>
<feature type="compositionally biased region" description="Polar residues" evidence="7">
    <location>
        <begin position="8682"/>
        <end position="8698"/>
    </location>
</feature>
<feature type="compositionally biased region" description="Polar residues" evidence="7">
    <location>
        <begin position="8706"/>
        <end position="8718"/>
    </location>
</feature>
<feature type="compositionally biased region" description="Basic and acidic residues" evidence="7">
    <location>
        <begin position="8721"/>
        <end position="8735"/>
    </location>
</feature>
<feature type="modified residue" description="Phosphoserine" evidence="20">
    <location>
        <position position="732"/>
    </location>
</feature>
<feature type="modified residue" description="Phosphothreonine" evidence="20">
    <location>
        <position position="2268"/>
    </location>
</feature>
<feature type="modified residue" description="Phosphoserine" evidence="20">
    <location>
        <position position="5655"/>
    </location>
</feature>
<feature type="modified residue" description="Phosphoserine" evidence="2">
    <location>
        <position position="8227"/>
    </location>
</feature>
<feature type="modified residue" description="Phosphothreonine" evidence="20">
    <location>
        <position position="8278"/>
    </location>
</feature>
<feature type="modified residue" description="Phosphoserine" evidence="2">
    <location>
        <position position="8281"/>
    </location>
</feature>
<feature type="modified residue" description="Phosphoserine" evidence="20">
    <location>
        <position position="8284"/>
    </location>
</feature>
<feature type="modified residue" description="Phosphoserine" evidence="19">
    <location>
        <position position="8308"/>
    </location>
</feature>
<feature type="modified residue" description="Phosphothreonine" evidence="20">
    <location>
        <position position="8363"/>
    </location>
</feature>
<feature type="disulfide bond" description="Interchain (with C-577 in SUN2); alternate" evidence="3">
    <location>
        <position position="8776"/>
    </location>
</feature>
<feature type="disulfide bond" description="Interchain (with C-759 in SUN1); alternate" evidence="3">
    <location>
        <position position="8776"/>
    </location>
</feature>
<feature type="splice variant" id="VSP_038791" description="In isoform 2 and isoform 3." evidence="14 16">
    <location>
        <begin position="1"/>
        <end position="7828"/>
    </location>
</feature>
<feature type="splice variant" id="VSP_038792" description="In isoform 5." evidence="15">
    <original>K</original>
    <variation>KSMYRGSP</variation>
    <location>
        <position position="103"/>
    </location>
</feature>
<feature type="splice variant" id="VSP_038793" description="In isoform 5." evidence="15">
    <location>
        <begin position="297"/>
        <end position="313"/>
    </location>
</feature>
<feature type="splice variant" id="VSP_038794" description="In isoform 5." evidence="15">
    <original>DIKTMEM</original>
    <variation>EYVLHHF</variation>
    <location>
        <begin position="1435"/>
        <end position="1441"/>
    </location>
</feature>
<feature type="splice variant" id="VSP_038795" description="In isoform 5." evidence="15">
    <location>
        <begin position="1442"/>
        <end position="8799"/>
    </location>
</feature>
<feature type="splice variant" id="VSP_038796" description="In isoform 2 and isoform 3." evidence="14 16">
    <original>IAVAQENKIQLQEMGERLAKASHESKASEIQYKLSRVKDRWQHLLDLMAA</original>
    <variation>MVVAEDLHGPRMAEDSSVDADLPDCDCDVS</variation>
    <location>
        <begin position="7829"/>
        <end position="7878"/>
    </location>
</feature>
<feature type="splice variant" id="VSP_038797" description="In isoform 2, isoform 3 and isoform 4." evidence="14 16">
    <location>
        <begin position="8218"/>
        <end position="8219"/>
    </location>
</feature>
<feature type="splice variant" id="VSP_038798" description="In isoform 2." evidence="16">
    <original>S</original>
    <variation>SDVVIPENPEAYVKLTENAIRNTS</variation>
    <location>
        <position position="8328"/>
    </location>
</feature>
<feature type="sequence conflict" description="In Ref. 2; AAN03487." evidence="17" ref="2">
    <original>G</original>
    <variation>W</variation>
    <location>
        <position position="1086"/>
    </location>
</feature>
<feature type="sequence conflict" description="In Ref. 2; AAN03487." evidence="17" ref="2">
    <original>I</original>
    <variation>T</variation>
    <location>
        <position position="1150"/>
    </location>
</feature>
<feature type="sequence conflict" description="In Ref. 1; AAG24393." evidence="17" ref="1">
    <original>E</original>
    <variation>G</variation>
    <location>
        <position position="7187"/>
    </location>
</feature>
<feature type="sequence conflict" description="In Ref. 1; AAG24393." evidence="17" ref="1">
    <original>M</original>
    <variation>I</variation>
    <location>
        <position position="7876"/>
    </location>
</feature>
<feature type="sequence conflict" description="In Ref. 1; AAG24392/AAG24393." evidence="17" ref="1">
    <original>P</original>
    <variation>L</variation>
    <location>
        <position position="8266"/>
    </location>
</feature>
<feature type="modified residue" description="Phosphoserine" evidence="20">
    <location sequence="Q6ZWR6-2">
        <position position="377"/>
    </location>
</feature>
<feature type="modified residue" description="Phosphoserine" evidence="20">
    <location sequence="Q6ZWR6-3">
        <position position="377"/>
    </location>
</feature>
<feature type="modified residue" description="Phosphoserine" evidence="20">
    <location sequence="Q6ZWR6-4">
        <position position="8225"/>
    </location>
</feature>
<comment type="function">
    <text evidence="2 10 11">Multi-isomeric modular protein which forms a linking network between organelles and the actin cytoskeleton to maintain the subcellular spatial organization. As a component of the LINC (LInker of Nucleoskeleton and Cytoskeleton) complex involved in the connection between the nuclear lamina and the cytoskeleton. The nucleocytoplasmic interactions established by the LINC complex play an important role in the transmission of mechanical forces across the nuclear envelope and in nuclear movement and positioning. May be involved in nucleus-centrosome attachment. During interkinetic nuclear migration (INM) at G2 phase and nuclear migration in neural progenitors its LINC complex association with SUN1/2 and probably association with cytoplasmic dynein-dynactin motor complexes functions to pull the nucleus toward the centrosome; SYNE1 and SYNE2 seem to act redundantly in cerebellum, midbrain, brain stem, and other brain regions except cerebral cortex and hippocampus. Required for centrosome migration to the apical cell surface during early ciliogenesis. May be involved in nuclear remodeling during sperm head formation in spermatogenesis; a probable SUN3:SYNE1/KASH1 LINC complex may tether spermatid nuclei to posterior cytoskeletal structures such as the manchette.</text>
</comment>
<comment type="subunit">
    <text evidence="2 8 11 12 13">Core component of LINC complexes which are composed of inner nuclear membrane SUN domain-containing proteins coupled to outer nuclear membrane KASH domain-containing nesprins. SUN and KASH domain-containing proteins seem to bind each other promiscuously; however, differentially expression of LINC complex constituents can give rise to specific assemblies. At least SUN1/2-containing core LINC complexes are proposed to be hexameric composed of three protomers of each KASH and SUN domain-containing protein. The SUN2:SYNE1/KASH1 LINC complex is a heterohexamer; the homotrimeric cloverleave-like conformation of the SUN domain is a prerequisite for LINC complex formation in which three separate SYNE1/KASH1 peptides bind at the interface of adjacent SUN domains. Self-associates. Interacts with SYNE3. Interacts with SUN3; proposed to form a spermatogenesis-specific LINC complex with SUN3 during sperm head formation. May interact with MUSK. Interacts with SPAG4/SUN4. Interacts with EMD and LMNA in vitro. Interacts with F-actin via its N-terminal domain. Interacts with DCTN1 and DYNC1I1/2; suggesting the association with the dynein-dynactin motor complex. Interacts (via KASH domain) with TMEM258 (By similarity).</text>
</comment>
<comment type="interaction">
    <interactant intactId="EBI-10760805">
        <id>Q6ZWR6-5</id>
    </interactant>
    <interactant intactId="EBI-10760805">
        <id>Q6ZWR6-5</id>
        <label>Syne1</label>
    </interactant>
    <organismsDiffer>false</organismsDiffer>
    <experiments>2</experiments>
</comment>
<comment type="interaction">
    <interactant intactId="EBI-10760805">
        <id>Q6ZWR6-5</id>
    </interactant>
    <interactant intactId="EBI-10760907">
        <id>Q6ZMZ3-1</id>
        <label>SYNE3</label>
    </interactant>
    <organismsDiffer>true</organismsDiffer>
    <experiments>2</experiments>
</comment>
<comment type="subcellular location">
    <subcellularLocation>
        <location evidence="17">Nucleus outer membrane</location>
        <topology evidence="17">Single-pass type IV membrane protein</topology>
        <orientation evidence="17">Cytoplasmic side</orientation>
    </subcellularLocation>
    <subcellularLocation>
        <location>Nucleus</location>
    </subcellularLocation>
    <subcellularLocation>
        <location>Nucleus envelope</location>
    </subcellularLocation>
    <subcellularLocation>
        <location>Cytoplasm</location>
        <location>Cytoskeleton</location>
    </subcellularLocation>
    <subcellularLocation>
        <location evidence="1">Cytoplasm</location>
        <location evidence="1">Myofibril</location>
        <location evidence="1">Sarcomere</location>
    </subcellularLocation>
    <text evidence="1">The largest part of the protein is cytoplasmic, while its C-terminal part is associated with the nuclear envelope, most probably the outer nuclear membrane. In skeletal and smooth muscles, a significant amount is found in the sarcomeres (By similarity).</text>
</comment>
<comment type="alternative products">
    <event type="alternative splicing"/>
    <isoform>
        <id>Q6ZWR6-1</id>
        <name>1</name>
        <name>Nesprin-1 Giant</name>
        <name>Enaptin</name>
        <sequence type="displayed"/>
    </isoform>
    <isoform>
        <id>Q6ZWR6-2</id>
        <name>2</name>
        <sequence type="described" ref="VSP_038791 VSP_038796 VSP_038797 VSP_038798"/>
    </isoform>
    <isoform>
        <id>Q6ZWR6-3</id>
        <name>3</name>
        <name>Syne-1A</name>
        <sequence type="described" ref="VSP_038791 VSP_038796 VSP_038797"/>
    </isoform>
    <isoform>
        <id>Q6ZWR6-4</id>
        <name>4</name>
        <name>Syne-1B</name>
        <sequence type="described" ref="VSP_038797"/>
    </isoform>
    <isoform>
        <id>Q6ZWR6-5</id>
        <name>5</name>
        <name>Enaptin-165</name>
        <sequence type="described" ref="VSP_038792 VSP_038793 VSP_038794 VSP_038795"/>
    </isoform>
</comment>
<comment type="tissue specificity">
    <text evidence="9 12">Expressed in C2F3 and CH310T1/2 cells, brain and skeletal muscle (at protein level).</text>
</comment>
<comment type="domain">
    <text evidence="1">The KASH domain, which contains a transmembrane domain, mediates the nuclear envelope targeting and is involved in the binding to SUN1 and SUN2 through recognition of their SUN domains.</text>
</comment>
<comment type="PTM">
    <text evidence="3">The disulfid bond with SUN1 or SUN2 is required for stability of the respective LINC complex under tensile forces.</text>
</comment>
<comment type="miscellaneous">
    <molecule>Isoform 4</molecule>
    <text evidence="17">Incomplete sequence.</text>
</comment>
<comment type="similarity">
    <text evidence="17">Belongs to the nesprin family.</text>
</comment>
<comment type="sequence caution" evidence="17">
    <conflict type="frameshift">
        <sequence resource="EMBL-CDS" id="AAG24393"/>
    </conflict>
</comment>
<evidence type="ECO:0000250" key="1"/>
<evidence type="ECO:0000250" key="2">
    <source>
        <dbReference type="UniProtKB" id="Q8NF91"/>
    </source>
</evidence>
<evidence type="ECO:0000250" key="3">
    <source>
        <dbReference type="UniProtKB" id="Q8WXH0"/>
    </source>
</evidence>
<evidence type="ECO:0000255" key="4"/>
<evidence type="ECO:0000255" key="5">
    <source>
        <dbReference type="PROSITE-ProRule" id="PRU00044"/>
    </source>
</evidence>
<evidence type="ECO:0000255" key="6">
    <source>
        <dbReference type="PROSITE-ProRule" id="PRU00385"/>
    </source>
</evidence>
<evidence type="ECO:0000256" key="7">
    <source>
        <dbReference type="SAM" id="MobiDB-lite"/>
    </source>
</evidence>
<evidence type="ECO:0000269" key="8">
    <source>
    </source>
</evidence>
<evidence type="ECO:0000269" key="9">
    <source>
    </source>
</evidence>
<evidence type="ECO:0000269" key="10">
    <source>
    </source>
</evidence>
<evidence type="ECO:0000269" key="11">
    <source>
    </source>
</evidence>
<evidence type="ECO:0000269" key="12">
    <source>
    </source>
</evidence>
<evidence type="ECO:0000269" key="13">
    <source>
    </source>
</evidence>
<evidence type="ECO:0000303" key="14">
    <source>
    </source>
</evidence>
<evidence type="ECO:0000303" key="15">
    <source>
    </source>
</evidence>
<evidence type="ECO:0000303" key="16">
    <source>
    </source>
</evidence>
<evidence type="ECO:0000305" key="17"/>
<evidence type="ECO:0000312" key="18">
    <source>
        <dbReference type="MGI" id="MGI:1927152"/>
    </source>
</evidence>
<evidence type="ECO:0007744" key="19">
    <source>
    </source>
</evidence>
<evidence type="ECO:0007744" key="20">
    <source>
    </source>
</evidence>
<accession>Q6ZWR6</accession>
<accession>Q8K3T7</accession>
<accession>Q9ERT7</accession>
<accession>Q9ERT8</accession>
<gene>
    <name evidence="18" type="primary">Syne1</name>
</gene>
<name>SYNE1_MOUSE</name>
<keyword id="KW-0009">Actin-binding</keyword>
<keyword id="KW-0025">Alternative splicing</keyword>
<keyword id="KW-0175">Coiled coil</keyword>
<keyword id="KW-0963">Cytoplasm</keyword>
<keyword id="KW-0206">Cytoskeleton</keyword>
<keyword id="KW-0221">Differentiation</keyword>
<keyword id="KW-1015">Disulfide bond</keyword>
<keyword id="KW-0472">Membrane</keyword>
<keyword id="KW-0539">Nucleus</keyword>
<keyword id="KW-0597">Phosphoprotein</keyword>
<keyword id="KW-1185">Reference proteome</keyword>
<keyword id="KW-0677">Repeat</keyword>
<keyword id="KW-0744">Spermatogenesis</keyword>
<keyword id="KW-0812">Transmembrane</keyword>
<keyword id="KW-1133">Transmembrane helix</keyword>
<sequence>MATSRASSRSHRDITNVMQRLQDEQEIVQKRTFTKWINSHLAKRKPPMVVDDLFEDMKDGIKLLALLEVLSGQKLPCEQGHRVKRIHAVANIGTALKFLEGRKIKLVNINATDIADGRPSIVLGLMWTIILYFQIEELTSNLPQLQSLSSSASSVDSMVSTETASPPSKRKVAAKIQGNAKKTLLKWVQHTAGKQMGIEVKDFGKSWRTGLAFHSVIHAIQPELVDLEKVKTRSNRENLEDAFTIAETQLGIPRLLDPEDVDVDKPDEKSIMTYVAQFLTQYPDIHGAGCDGQEDDVVFVGFTNNIALLLGFQRDDRLILKETKVWIEQFERDFTRAQMTESSLQDKYQAFKHFRVQYEMKRKQVEHIIQPLQRDGKLTLDQALVKQCWERVSSRLFDWHIQLDKSLPAPLGTIGAWLYRAEVALREEITIQQVHEETANTIQRKLEQHKDLLQNTDAHKRAFHEIYQTRSVNGIPMPPDQLEDMAERFHFVSSTSELHLMKMEFLELKYRLLSLLVLAESKLKSWIIKYGRRESVELLLQSYISFIENSKFFEQYEVTYQILKQTADIYVKAEGSVEEAENVMKFMSEATAQWRNLSVEVRSVRSMLEEVISNWDRYGDTVASLQAWLEDAEKMLSQSEHAKKDFFRNLPHWIQQHTAMNDAGNFLIETCDEIVSRDLKQQLLLLNGRWRELFMEVKQYARADEMDRMKKEYIDVTTTLFGFATEAHRKLSEPLEVSFINVKLLIQDLEDLEKRVPVMDAQYKMIAKKAHLFAKESPQEEANEMLTTMSKLKEQLSKVKECCSPLLYEAQQLTVPLEELETQITSFYDSLGKINEILSVLEQEAQSSTLFKQKHQELLASQENCKKSLTLIEKGSQSVQKLVTSSQARKPWDHTKLQKQIADVHHAFQSMIKKTGDWKKHVEANSRLMKKFEESRAELEKVLRVAQEGLEEKGDPEELLRRHTEFFSQLDQRVLNAFLKACDELTDILPEQEQQGLQEAVRKLHKQWKDLQGEAPYHLLHLKIAVEKDRFSAAVEECRAELEQETKLAPQEGSEKIIKEHRVFFSDKGPHHLCEKRLQLIEELCGKLPVQDPVRDTCGACHTALKELKASIDNTYTMLVDDPDKWKDYTSRFSEFSSWVSAKKACLKKIKDEPIDTGNHDEVKHMVDEIRNDITKKGESLSWLKSRLKYLIDISSENEAQKRGDELAELSSSFKALVALLSEVEKLLSNFGECVQYKEIVKSSLEGLISGPQESKEEAEMILDSKNLLEAQQLLLHHQQKTKMISAKKRDLQEQMEQAQQGGQAGPGQEELRKLESTLTGLEQSRERQERRIQVSLRKWERFETNKETVVRYLFQTGSSHERFLSFSSLESLSSELEQTKEFSKRTESIATQAENLVKEAAELPLGPRNKRVLQRQAKSIKEQVTTLEDTLEEDIKTMEMVKSKWDHFGSNFETLSIWILEKENELSSLEASASAADVQISQIKVTIQEIESKIDSIVGLEEEAQSFAQFVTTGESARIKAKLTQIRRYWEELQEHARGLEGTILGHLSQQQKFEENLRKIRQSVSEFAERLADPIKICSSAAETYKVLQEHMDLCQAVESLSSTVTMFSASAQKAVNRESCTQEAAALQQQYEEILHKAKEMQTALEDLLARWQRLEKGLSPFLTWLERCEAIASSPEKDISADRGKVESELQLIQALQNEVVSQASLYSNLLQLKEALFSVASKEDVAVMKLQLEQLDERWGDLPQIISKRMHFLQSVLAEHKQFDELLFSFSVWIKQFLGELQRTSEINLRDHQVALTRHKDHAAEIEKKRGEITHLQGHLSQLRSLGRAQDLHPLQSKVDDCFQLFEEASQVVERRKLALAQLAEFLQSHACMSTLLYQLRQTVEATKSMSKKQSDSLKTDLHSAIQDVKTLESSAISLDGTLTKAQCHLKSASPEERTSCRATTDQLSLEVERIQNLLGTKQSEADALVALKEAFREQKEELLRSIEDIEERMDRERLKVPTRQALQHRLRVFNQLEDELNSHEHELCWLKDKAKQIAQKDVAFAPEVDREINGLEATWDDTRRQIHENQGQCCGLIDLVREYQSLKSTVCNVLEDASNVVVMRATIKDQGDLKWAFSKHETSRNEMNSKQKELDSFTSKGKHLLSELKKIHSGDFSLVKTDMESTLDKWLDVSERIEENMDMLRVSLSIWDDVLSRKDEIEGWSNSSLPKLAENISNLNNSLRAEELLKELESEVKIKALKLEDLHSKINNLKELTKNPETPTELQFIEADLRQKLEHAKEITEEARGTLKDFTAQRTQVERFVKDITAWLINVEESLTRCAQTETCEGLKKAKDIRKELQSQQNSITSTQEELNSLCRKHHSVELESLGRAMTGLIKKHEATSQLCSQTQARIQDSLEKHFSGSMKEFQEWFLGAKAAARESSNLTGDSQILEARLHNLQGVLDSLSDGQSKLDVVTQEGQTLYAHLPKQIVSSIQEQITKANEEFQAFLKQCLKEKQALQDCVSELGSFEDQHRKLNLWIHEMEERLKTENLGESKHHISEKKNEVRKVEMFLGELLAARESLDKLSQRGQLLSEESHSAGKGGCRSTQLLTSYQSLLRVTKEKLRSCQLALKEHEALEEATQSMWARVKDVQDRLACAESTLGNKETLEGRLSQIQDILLMKGEGEVKLNLAIGKGDQALRSSNKEGQQAIQDQLEMLKKAWAEAMNSAVHAQSTLESVIDQWNDYLEKKSQLEQWMESVDQRLEHPLQLQPGLKEKFSLLDHFQSIVSEAEDHTGALQQLAAKSRELYQKTQDESFKEAGQEELRTQFQDIMTVAKEKMRTVEDLVKDHLMYLDAVQEFADWLHSAKEELHRWSDTSGDPSATQKKLLKIKELIDSREIGAGRLSRVESLAPAVKQNTAASGCELLNSEMQALRADWRQWEDCLFQTQSSLESLVSEMALSEQEFFGQVTQLEQALEQFCTLLKTWAQQLTLLEGKNSDEEILECWHKGREILDALQKAEPMTEDLKSQLNELCRFSRDLSPYSEKVSGLIKEYNCLCLQASKGCQNKEQILQERFQKASRGFQQWLVNAKITTAKCFDLPQNLSEVSSSLQKIQEFLSESENGQHKLNTMLFKGELLSSLLTEEKAQAVQAKVLTAKEEWKSFHANLHQKESALENLKIQMKDFEVSAELVQNWLSKTERLVQESSNRLYDLPAKRREQQKLQSVLEEIQCYEPQLHRLKEKARQLWEGQAASKSFVHRVSQLSSQYLALSNVTKEKVSRLDRIIAEHNRFSQGVKELQDWMSDAVHMLDSYCLPTSDKSVLDSRMLKLEALLSVRQEKEIQMKMVVTRGEYVLQSTSLEGSAAVQQQLQAVKDMWESLLSAAIRCKSQLEGALSKWTSYQDDVRQFSSWMDSVEVSLTESEKQHTELREKITALGKAKLLNEEVLSHSSLLETIEVKRAAMTEHYVTQLELQDLQERHQALKEKAKEAVTKLEKLVRLHQEYQRDLKAFESWLEQEQEKLDRCSVHEGDTNAHETMLRDLQELQVRCAEGQALLNSVLHTREDVIPSGLPQAEDRVLESLRQDWQVYQHRLAEARMQLNNVVNKLRLMEQKFQQADEWLKRMEEKINFRSECQSSRSDKEIQLLQLKKWHEDLSAHRDEVEEVGTRAQGILDETHISSRMGCQATQLTSRYQALLLQVLEQIKFFEEELQCLEETESSLSSYSDWYGSTHKNFKNVATKIDKVDESMMGKKLKTLEVLLKDMEKGHSLLKSAREKGERAMKFLAEHEAEALRKEIHTYMEQLKNLTSTVRKECMSLEKGLHLAKEFSDKYKVLAQWMAEYQEILCTPEEPKMELYEKKAQLSKYKSLQQMVLSHEPSVTSVQEKSEALLELVQDQSLKDKIQKLQSDFQDLCSRAKERVFSLEAKVKDHEDYNTELQEVEKWLLQMSGRLVAPDLLEMSSLETITQQLAHHKAMMEEIAGFEDRLDNLKAKGDTLIGQCPEHLQAKQKQTVQAHLQGTKDSYSAICSTAQRVYRSLEYELQKHVSSQDTLQQCQAWISAVQPDLKPSPQPPLSRAEAVKQVKHFRALQEQARTYLDLLCSMCDLSNSSVKNTAKDIQQTEQLIEQRLVQAQNLTQGWEEIKSLKAELWIYLQDADQQLQNMKRRHTELEINIAQNMVMQVKDFIKQLQCKQVSVSTIVEKVDKLTKNQESPEHKEITHLNDQWQDLCLQSDKLCAQREQDLQRTSSYHDHMRVVEAFLEKFTTEWDSLARSNAESTAIHLEALKKLALALQEEMYAIDDLKDCKQKLIEQLGLDDRELVREQTSHLEQRWFQLQDLVKRKIQVSVTNLEELNVIQSRFQELMEWAEEQQPNIVEALKQSPPPGMAQHLLMDHLAICSELEAKQVLLKSLMKDADRVMADLGLNERKVIQKALSEAQKHVSCLSDLVGQRRKYLNKALSEKTQFLMAVFQATSQIQQHERKIVFREYICLLPDDVSKQVKTCKTAQASLKTYQNEVTGLCAQGRELMKGITKQEQEEVLGKLQELQTVYDTVLQKCSHRLQELEKSLVSRKHFKEDFDKACHWLKQADIVTFPEINLMNEKTELHAQLDKYQSILEQSPEYENLLLTLQTTGQAMLPSLNEVDHSYLSEKLSALPQQFNVIVALAKDKFYKTQEAILARKEYTSLIELTTQSLGDLEDQFLKMRKMPSDLIVEESVSLQQSCSALLGEVVALGEAVNELNQKKESFRSTGQPWQPEKMLQLATLYHRLKRQAEQRVSFLEDTTSVYKEHAQMCRQLESQLEVVKREQAKVNEETLPAEEKLKVYHSLAGSLQDSGILLKRVATHLEDLSPHLDPTAYEKAKSQVQSWQEELKQMTSDVGELVTECESRMVQSIDFQTEMSRSLDWLRRVKAELSGPVCLDLSLQDIQEEIRKIQIHQEEVLSSLRIMSALSHKEQEKFTKAKELISADLEHTLAELQELDGDVQEALRTRQATLTEIYSRCQRYYQVFQAANDWLDDAQEMLQLAGNGLDVESAEENLRSHMEFFKTEGQFHSNMEELRGLVARLDPLIKATGKEELAQKMASLEKRSQGIIQESHTQRDLLQRCMVQWQEYQKAREGVIELMNDAEKKLSEFAVLKTSSIHEAEEKLSKHKALVSVVDSFHEKIVALEEKASQLEQTGNDTSKATLSRSMTTVWQRWTRLRAVAQDQEKILEDAVDEWKRLSAKVKETTEVINQLQGRLPGSSTEKASKAELMTLLESHDTYLMDLESQQLTLGVLQQRALSMLQDRAFPGTEEEVPILRAITALQDQCLNMQEKVKNHGKLVKQELQEREAVETRINSVKSWVQETKDYLGNPTIEIDTQLEELKRLLAEATSHQESIEKIAEEQKNKYLGLYTVLPSEISLQLAEVALDLKIHDQIQEKVQEIEEGKAMSQEFSCKIQKVTKDLTTILTKLKAKTDDLVHAKAEHKMLGEELDGCNSKLMELDAAIQTFSERHSQLGQPLAKKIGKLTELHQQTIRQAENRLSKLNQALSHMEEYNEMLETVRKWIEKAKVLVHGNIAWNSASQLQEQYILHQTLLEESGEIDSDLEAMAEKVQHLANVYCTGKLSQQVTQFGREMEELRQAIRVRLRNLQDAAKDMKKFEGELRNLQVALEQAQTILTSPEVGRRSLKEQLCHRQHLLSEMESLKPKMQAVQLCQSALRIPEDVVASLPLCHAALRLQEEASQLQHTAIQQCNIMQAKKHSLIFPPKEAVVQYEQYKQEMKHLQQLIEEAHREIEDKPVATSNIQELQAQISLHEELAQKIKGYQEQIDSLNSKCKMLTMKAKHATMLLTVTEVEGLAEGTEDLDRELHPTPSAHPSVVMMTAGRCHTLLSPVTEESGEEGTNSEISSPPACRSPSPVANTEAAVNQDIAYYQALSAEGLQTDAARIPPSAAVSQELYEPGLEPSATAKLGDLQRSWETLKNVISEKQRTLYEVLERQQKYQDSLQSISTKMEAMEMKLGESLEPSRSPESQMAEHQALMDEVQMLQDEINGLQVSLAEELVAESQESDPAEQLALQSTLTVLAERMSTIRMKAAGKRQLLEEKLSDQLEEQRQEQALQRYRCEADELDHWLLNTKATLDVALGTSQEPMDMDAQLVDCQNMLVEIEQKVVALSQLSVHNENLLLEGKAHTKEEAEQLAVKLRLLKGSLGELQRALHDRQLDMQGVTQEKEENDVDFTDTQSPGVQEWLAQARTTRTHQRQSSLQQQKEFEQELAEQKSLLRSVASRGEEILTQHSTAEGSGGLGEKPDVLSQELGIAEDQMRVKWESLHQEFSAKQKLLQNILEQEQEQVLYSSPNRLLSGVLPFRGEAQTQDKTSVTSLLDGLSQAFGEASSQSGGTDRQSIHLEQKLYDGVSATSTWLNDVEERLFVATAPLPEETEACLFNQEALAKDIKEMSEEMDKNKNLFSQAFPEDSDNRDVIEDTLGCLLGRLSLLDSVVDQRCHQMKERLQQILRFQNDLKVLFTSLADSKYIILQKLANVFEQPIVEQMQAIQQAEEGLRDLEGGISELKRWADKLQVEQSAVQELSKLQDMYDELLMTVSSRRSSLHQNLALKSQYDKALQDLVDLLDTGQEKMTGDQKIIVCSKEEIQQLLGKHKEYFQGLESHMILTEILFRKIVGFAAVKETQFHTDCMAQASAVLKQAHKRGVELEYILEMWSHLDENRQELSRQLEVIENSIPSVGLVEESEDRLVERTNLYQHLKSSLNEYQPKLYQALDDGKRLLMSVSCSELESQLNQLGEHWLSNTNKVSKELHRLETILKHWTRYQSEAAALNHWLQCAKDRLAFWTQQSVTVPQELEMVRDHLSAFLEFSKEVDAKSALKSSVTSTGNQLLRLKKVDTAALRAELSRMDSQWTDLLTGIPVVQEKLHQLQMDKLPSRHAISEVMSWISLMESVILKDEEDIRNAIGYKAIHEYLQKYKGFKIDLNCKQLTADFVNQSVLQISSQDVESKRSDKTDFAEQLGAMNKSWQLLQGRVGEKIQMLEGLLESWSEYENSVQSLKAWFANQERKLKEQHLLGDRNSVENALKDCQELEDLIKAKEKEVEKIEQNGLALIQNKREEVSGSVMSTLQELRQTWISLDRTVEQLKIQLTSALGQWSNHKAACDEINGHLMEARYSLSRFRLLTGSSEAVQVQVDNLQNLHDELEKQEGGLQKFGSITNQLLKECHPPVAETLSSTLQEVNMRWNNLLEEIAEQLHSSKALLQLWQRYKDYSKQCASAIQRQEEQTSVLLKAATNKDIADDEVTKWIQDCNDLLKGLETVKDSLFILRELGEQLGQQVDVSAAAAIQCEQLCFSQRLGALEQALCKQQAVLQAGVVDYETFAKSLEALEVWMVEAEGILQGQDPTHSSDLSTIQERMEELKGQMLKFSSLAPDLDRLNELGYRLPLNDKEIKRMQNLNRHWSLTSSQTTERFSKLQSFLLQHQTFLEKCETWMEFLVQTEHKLAVEISGNYQHLLEQQRAHELFQAEMFSRQQILHSIIVDGQNLLEQGQVDDREEFSLKLTLLSNQWQGVIRRAQQRRGIIDSQIRQWQRYREMAEKLRKWLAEVSHLPLSGLGNIPVPLQQVRMLFDEVQFKEKVFLRQQGSYILTVEAGKQLLLSADSGAEAALQAELTDIQEKWKAASMHLEEQKKKLAFLLKDWEKCERGIANSLEKLRMFKKRLSQPLPDHHEELHAEQMRCKELENAVGRWTDDLTELMLVRDALAVYLSAEDISMLKERVELLQRQWEELCHQVSLRRQQVSERLNEWAVFSEKNKELCEWLTQMESKVSQNGDILIEEMIEKLKKDYQEEIAVAQENKIQLQEMGERLAKASHESKASEIQYKLSRVKDRWQHLLDLMAARVKKLKETLVAVQQLDKNMGSLRTWLAHMESELAKPIVYDSCNSEEIQRKLNEQQELQRDIEKHSTGVASVLNLCEVLLHDCDACATDAECDSIQQATRNLDRRWRNICAMSMERRLKIEETWRLWQKFLDDYSRFEDWLEVSERTAAFPSSSGVLYTVAKEELKKFEAFQRQVHESLTQLELINKQYRRLARENRTDSACSLRQMVHGGNQRWDDLQKRVTSILRRLKHFISQREEFETARDSILVWLTEMDLQLTNIEHFSECDVQAKIKQLKAFQQEISLNHNKIEQIIAQGEQLIEKSEPLDAAVIEEELDELRRYCQEVFGRVERYHKKLIRLPVRLPDDHDLSDRELDLEDSTALSDLRWQDPSADGMPSPQPSSNPSLSLPQPLRSERSGRDTPASVDSIPLEWDHDYDLSRDLESASRTLPSEDEEGEEDKEFYLRGAVGLSGDPSSLESQMRQLDKALDDSRFQIQQTANILRSKTPTGPDLDTSYKGYMKLLGECSGSIDSVRRLEHKLAEEESFPGFVNLNSTETQTAGVIDRWELLQAQAMSKELRMKQNLQKWQQFNSDLNNIWAWLGETEEELDRLQHLALSTDIHTIESHIKKLKELQKAVDHRKAIILSINLCSSEFTQADSKESHDLQDRLSQMNGRWDRVCSLLEDWRGLLQDALMQCQEFHEMSHALLLMLENIDRRKNEIVPIDSTLDPETLQDHHKQLMQIKQELLKSQLRVASLQDMSRQLLVNAEGSDCLEAKEKVHVIGNRLKLLLKEVSHHIKDLEKLLDMSSSQQDLSSWSSADELDTSGSVSPTSGRSTPNRQKSPRGKCSLSQPGPSVSSPKSRSTRDGSDSSRSDPRPERVGRAFLFRILRAALPFQLLLLLLIGLTCLVPMSEKDYSCALSNNFARSFHPMLRYTNGPPPL</sequence>
<proteinExistence type="evidence at protein level"/>
<dbReference type="EMBL" id="AF281869">
    <property type="protein sequence ID" value="AAG24392.1"/>
    <property type="molecule type" value="mRNA"/>
</dbReference>
<dbReference type="EMBL" id="AF281870">
    <property type="protein sequence ID" value="AAG24393.1"/>
    <property type="status" value="ALT_FRAME"/>
    <property type="molecule type" value="mRNA"/>
</dbReference>
<dbReference type="EMBL" id="AF535143">
    <property type="protein sequence ID" value="AAN03487.1"/>
    <property type="molecule type" value="mRNA"/>
</dbReference>
<dbReference type="EMBL" id="AK036828">
    <property type="protein sequence ID" value="BAC29595.1"/>
    <property type="molecule type" value="mRNA"/>
</dbReference>
<dbReference type="EMBL" id="AC156392">
    <property type="status" value="NOT_ANNOTATED_CDS"/>
    <property type="molecule type" value="Genomic_DNA"/>
</dbReference>
<dbReference type="EMBL" id="AC156393">
    <property type="status" value="NOT_ANNOTATED_CDS"/>
    <property type="molecule type" value="Genomic_DNA"/>
</dbReference>
<dbReference type="EMBL" id="AC157020">
    <property type="status" value="NOT_ANNOTATED_CDS"/>
    <property type="molecule type" value="Genomic_DNA"/>
</dbReference>
<dbReference type="EMBL" id="AC159748">
    <property type="status" value="NOT_ANNOTATED_CDS"/>
    <property type="molecule type" value="Genomic_DNA"/>
</dbReference>
<dbReference type="EMBL" id="AC161829">
    <property type="status" value="NOT_ANNOTATED_CDS"/>
    <property type="molecule type" value="Genomic_DNA"/>
</dbReference>
<dbReference type="EMBL" id="AC162381">
    <property type="status" value="NOT_ANNOTATED_CDS"/>
    <property type="molecule type" value="Genomic_DNA"/>
</dbReference>
<dbReference type="EMBL" id="AC162385">
    <property type="status" value="NOT_ANNOTATED_CDS"/>
    <property type="molecule type" value="Genomic_DNA"/>
</dbReference>
<dbReference type="CCDS" id="CCDS56679.1">
    <molecule id="Q6ZWR6-3"/>
</dbReference>
<dbReference type="CCDS" id="CCDS56680.1">
    <molecule id="Q6ZWR6-5"/>
</dbReference>
<dbReference type="RefSeq" id="NP_001073154.1">
    <property type="nucleotide sequence ID" value="NM_001079686.1"/>
</dbReference>
<dbReference type="RefSeq" id="NP_071310.2">
    <molecule id="Q6ZWR6-3"/>
    <property type="nucleotide sequence ID" value="NM_022027.3"/>
</dbReference>
<dbReference type="RefSeq" id="NP_700448.2">
    <molecule id="Q6ZWR6-5"/>
    <property type="nucleotide sequence ID" value="NM_153399.3"/>
</dbReference>
<dbReference type="RefSeq" id="XP_036011830.1">
    <molecule id="Q6ZWR6-2"/>
    <property type="nucleotide sequence ID" value="XM_036155937.1"/>
</dbReference>
<dbReference type="SMR" id="Q6ZWR6"/>
<dbReference type="BioGRID" id="211015">
    <property type="interactions" value="14"/>
</dbReference>
<dbReference type="DIP" id="DIP-60966N"/>
<dbReference type="FunCoup" id="Q6ZWR6">
    <property type="interactions" value="1314"/>
</dbReference>
<dbReference type="IntAct" id="Q6ZWR6">
    <property type="interactions" value="10"/>
</dbReference>
<dbReference type="MINT" id="Q6ZWR6"/>
<dbReference type="STRING" id="10090.ENSMUSP00000039440"/>
<dbReference type="CarbonylDB" id="Q6ZWR6"/>
<dbReference type="GlyConnect" id="2530">
    <property type="glycosylation" value="1 N-Linked glycan (1 site)"/>
</dbReference>
<dbReference type="GlyCosmos" id="Q6ZWR6">
    <property type="glycosylation" value="1 site, 1 glycan"/>
</dbReference>
<dbReference type="GlyGen" id="Q6ZWR6">
    <property type="glycosylation" value="7 sites, 4 N-linked glycans (3 sites), 1 O-linked glycan (3 sites)"/>
</dbReference>
<dbReference type="iPTMnet" id="Q6ZWR6"/>
<dbReference type="PhosphoSitePlus" id="Q6ZWR6"/>
<dbReference type="jPOST" id="Q6ZWR6"/>
<dbReference type="PaxDb" id="10090-ENSMUSP00000039440"/>
<dbReference type="PeptideAtlas" id="Q6ZWR6"/>
<dbReference type="ProteomicsDB" id="254843">
    <molecule id="Q6ZWR6-1"/>
</dbReference>
<dbReference type="ProteomicsDB" id="254844">
    <molecule id="Q6ZWR6-2"/>
</dbReference>
<dbReference type="ProteomicsDB" id="254845">
    <molecule id="Q6ZWR6-3"/>
</dbReference>
<dbReference type="ProteomicsDB" id="254846">
    <molecule id="Q6ZWR6-4"/>
</dbReference>
<dbReference type="ProteomicsDB" id="254847">
    <molecule id="Q6ZWR6-5"/>
</dbReference>
<dbReference type="Pumba" id="Q6ZWR6"/>
<dbReference type="Antibodypedia" id="19931">
    <property type="antibodies" value="168 antibodies from 27 providers"/>
</dbReference>
<dbReference type="DNASU" id="64009"/>
<dbReference type="Ensembl" id="ENSMUST00000041639.7">
    <molecule id="Q6ZWR6-5"/>
    <property type="protein sequence ID" value="ENSMUSP00000039440.6"/>
    <property type="gene ID" value="ENSMUSG00000096054.4"/>
</dbReference>
<dbReference type="Ensembl" id="ENSMUST00000095899.5">
    <molecule id="Q6ZWR6-3"/>
    <property type="protein sequence ID" value="ENSMUSP00000093587.4"/>
    <property type="gene ID" value="ENSMUSG00000096054.4"/>
</dbReference>
<dbReference type="GeneID" id="64009"/>
<dbReference type="KEGG" id="mmu:64009"/>
<dbReference type="UCSC" id="uc007egn.1">
    <molecule id="Q6ZWR6-5"/>
    <property type="organism name" value="mouse"/>
</dbReference>
<dbReference type="UCSC" id="uc007egt.2">
    <molecule id="Q6ZWR6-2"/>
    <property type="organism name" value="mouse"/>
</dbReference>
<dbReference type="AGR" id="MGI:1927152"/>
<dbReference type="CTD" id="23345"/>
<dbReference type="MGI" id="MGI:1927152">
    <property type="gene designation" value="Syne1"/>
</dbReference>
<dbReference type="VEuPathDB" id="HostDB:ENSMUSG00000096054"/>
<dbReference type="eggNOG" id="KOG0516">
    <property type="taxonomic scope" value="Eukaryota"/>
</dbReference>
<dbReference type="GeneTree" id="ENSGT00940000154481"/>
<dbReference type="HOGENOM" id="CLU_000034_0_1_1"/>
<dbReference type="InParanoid" id="Q6ZWR6"/>
<dbReference type="OrthoDB" id="18853at2759"/>
<dbReference type="PhylomeDB" id="Q6ZWR6"/>
<dbReference type="TreeFam" id="TF317709"/>
<dbReference type="TreeFam" id="TF337116"/>
<dbReference type="BioGRID-ORCS" id="64009">
    <property type="hits" value="3 hits in 75 CRISPR screens"/>
</dbReference>
<dbReference type="ChiTaRS" id="Syne1">
    <property type="organism name" value="mouse"/>
</dbReference>
<dbReference type="PRO" id="PR:Q6ZWR6"/>
<dbReference type="Proteomes" id="UP000000589">
    <property type="component" value="Chromosome 10"/>
</dbReference>
<dbReference type="RNAct" id="Q6ZWR6">
    <property type="molecule type" value="protein"/>
</dbReference>
<dbReference type="Bgee" id="ENSMUSG00000096054">
    <property type="expression patterns" value="Expressed in cerebellar cortex and 222 other cell types or tissues"/>
</dbReference>
<dbReference type="ExpressionAtlas" id="Q6ZWR6">
    <property type="expression patterns" value="baseline and differential"/>
</dbReference>
<dbReference type="GO" id="GO:0005856">
    <property type="term" value="C:cytoskeleton"/>
    <property type="evidence" value="ECO:0007669"/>
    <property type="project" value="UniProtKB-SubCell"/>
</dbReference>
<dbReference type="GO" id="GO:0005635">
    <property type="term" value="C:nuclear envelope"/>
    <property type="evidence" value="ECO:0000314"/>
    <property type="project" value="UniProtKB"/>
</dbReference>
<dbReference type="GO" id="GO:0005640">
    <property type="term" value="C:nuclear outer membrane"/>
    <property type="evidence" value="ECO:0007669"/>
    <property type="project" value="UniProtKB-SubCell"/>
</dbReference>
<dbReference type="GO" id="GO:0030017">
    <property type="term" value="C:sarcomere"/>
    <property type="evidence" value="ECO:0000266"/>
    <property type="project" value="MGI"/>
</dbReference>
<dbReference type="GO" id="GO:0051015">
    <property type="term" value="F:actin filament binding"/>
    <property type="evidence" value="ECO:0000315"/>
    <property type="project" value="UniProtKB"/>
</dbReference>
<dbReference type="GO" id="GO:0042802">
    <property type="term" value="F:identical protein binding"/>
    <property type="evidence" value="ECO:0000353"/>
    <property type="project" value="IntAct"/>
</dbReference>
<dbReference type="GO" id="GO:0042803">
    <property type="term" value="F:protein homodimerization activity"/>
    <property type="evidence" value="ECO:0000314"/>
    <property type="project" value="UniProtKB"/>
</dbReference>
<dbReference type="GO" id="GO:0030154">
    <property type="term" value="P:cell differentiation"/>
    <property type="evidence" value="ECO:0007669"/>
    <property type="project" value="UniProtKB-KW"/>
</dbReference>
<dbReference type="GO" id="GO:0051642">
    <property type="term" value="P:centrosome localization"/>
    <property type="evidence" value="ECO:0000315"/>
    <property type="project" value="UniProtKB"/>
</dbReference>
<dbReference type="GO" id="GO:0007097">
    <property type="term" value="P:nuclear migration"/>
    <property type="evidence" value="ECO:0000315"/>
    <property type="project" value="MGI"/>
</dbReference>
<dbReference type="GO" id="GO:1902017">
    <property type="term" value="P:regulation of cilium assembly"/>
    <property type="evidence" value="ECO:0000315"/>
    <property type="project" value="UniProtKB"/>
</dbReference>
<dbReference type="GO" id="GO:0007283">
    <property type="term" value="P:spermatogenesis"/>
    <property type="evidence" value="ECO:0007669"/>
    <property type="project" value="UniProtKB-KW"/>
</dbReference>
<dbReference type="CDD" id="cd21241">
    <property type="entry name" value="CH_SYNE1_rpt1"/>
    <property type="match status" value="1"/>
</dbReference>
<dbReference type="CDD" id="cd21243">
    <property type="entry name" value="CH_SYNE1_rpt2"/>
    <property type="match status" value="1"/>
</dbReference>
<dbReference type="CDD" id="cd00176">
    <property type="entry name" value="SPEC"/>
    <property type="match status" value="10"/>
</dbReference>
<dbReference type="FunFam" id="1.20.58.60:FF:000041">
    <property type="entry name" value="Nesprin-1 isoform 1"/>
    <property type="match status" value="1"/>
</dbReference>
<dbReference type="FunFam" id="1.20.58.60:FF:000073">
    <property type="entry name" value="Nesprin-1 isoform 1"/>
    <property type="match status" value="1"/>
</dbReference>
<dbReference type="FunFam" id="1.20.58.60:FF:000103">
    <property type="entry name" value="Nesprin-1 isoform 1"/>
    <property type="match status" value="1"/>
</dbReference>
<dbReference type="FunFam" id="1.20.58.60:FF:000104">
    <property type="entry name" value="Nesprin-1 isoform 1"/>
    <property type="match status" value="1"/>
</dbReference>
<dbReference type="FunFam" id="1.20.58.60:FF:000190">
    <property type="entry name" value="Nesprin-1 isoform 1"/>
    <property type="match status" value="1"/>
</dbReference>
<dbReference type="FunFam" id="1.10.418.10:FF:000033">
    <property type="entry name" value="nesprin-1 isoform X1"/>
    <property type="match status" value="1"/>
</dbReference>
<dbReference type="FunFam" id="1.10.418.10:FF:000037">
    <property type="entry name" value="nesprin-1 isoform X1"/>
    <property type="match status" value="1"/>
</dbReference>
<dbReference type="FunFam" id="1.20.58.60:FF:000139">
    <property type="entry name" value="nesprin-1 isoform X1"/>
    <property type="match status" value="1"/>
</dbReference>
<dbReference type="FunFam" id="1.20.58.60:FF:000213">
    <property type="entry name" value="nesprin-1 isoform X11"/>
    <property type="match status" value="1"/>
</dbReference>
<dbReference type="FunFam" id="1.20.58.60:FF:000119">
    <property type="entry name" value="nesprin-1 isoform X2"/>
    <property type="match status" value="1"/>
</dbReference>
<dbReference type="FunFam" id="1.20.58.60:FF:000137">
    <property type="entry name" value="nesprin-1 isoform X2"/>
    <property type="match status" value="1"/>
</dbReference>
<dbReference type="FunFam" id="1.20.58.60:FF:000112">
    <property type="entry name" value="nesprin-1 isoform X4"/>
    <property type="match status" value="1"/>
</dbReference>
<dbReference type="FunFam" id="1.20.58.60:FF:000155">
    <property type="entry name" value="nesprin-1 isoform X4"/>
    <property type="match status" value="1"/>
</dbReference>
<dbReference type="FunFam" id="1.20.58.60:FF:000177">
    <property type="entry name" value="nesprin-1 isoform X5"/>
    <property type="match status" value="1"/>
</dbReference>
<dbReference type="FunFam" id="1.20.58.60:FF:000285">
    <property type="entry name" value="Spectrin repeat containing nuclear envelope protein 1"/>
    <property type="match status" value="1"/>
</dbReference>
<dbReference type="FunFam" id="1.20.58.60:FF:000126">
    <property type="entry name" value="Spectrin repeat containing, nuclear envelope 1a"/>
    <property type="match status" value="1"/>
</dbReference>
<dbReference type="FunFam" id="1.20.58.60:FF:000181">
    <property type="entry name" value="Spectrin repeat containing, nuclear envelope 1a"/>
    <property type="match status" value="1"/>
</dbReference>
<dbReference type="FunFam" id="1.20.58.60:FF:000182">
    <property type="entry name" value="Spectrin repeat containing, nuclear envelope 1a"/>
    <property type="match status" value="1"/>
</dbReference>
<dbReference type="FunFam" id="1.20.58.60:FF:000193">
    <property type="entry name" value="Spectrin repeat containing, nuclear envelope 1a"/>
    <property type="match status" value="1"/>
</dbReference>
<dbReference type="FunFam" id="1.20.58.60:FF:000231">
    <property type="entry name" value="Spectrin repeat containing, nuclear envelope 1a"/>
    <property type="match status" value="1"/>
</dbReference>
<dbReference type="FunFam" id="1.20.58.60:FF:000267">
    <property type="entry name" value="Spectrin repeat containing, nuclear envelope 1a"/>
    <property type="match status" value="1"/>
</dbReference>
<dbReference type="FunFam" id="1.20.58.60:FF:000359">
    <property type="entry name" value="Spectrin repeat containing, nuclear envelope 1a"/>
    <property type="match status" value="1"/>
</dbReference>
<dbReference type="FunFam" id="1.20.58.60:FF:000386">
    <property type="entry name" value="Spectrin repeat containing, nuclear envelope 1a"/>
    <property type="match status" value="1"/>
</dbReference>
<dbReference type="FunFam" id="1.20.58.60:FF:000478">
    <property type="entry name" value="Spectrin repeat-containing, nuclear envelope 1b"/>
    <property type="match status" value="1"/>
</dbReference>
<dbReference type="Gene3D" id="1.20.58.60">
    <property type="match status" value="31"/>
</dbReference>
<dbReference type="Gene3D" id="1.10.418.10">
    <property type="entry name" value="Calponin-like domain"/>
    <property type="match status" value="2"/>
</dbReference>
<dbReference type="InterPro" id="IPR001589">
    <property type="entry name" value="Actinin_actin-bd_CS"/>
</dbReference>
<dbReference type="InterPro" id="IPR001715">
    <property type="entry name" value="CH_dom"/>
</dbReference>
<dbReference type="InterPro" id="IPR036872">
    <property type="entry name" value="CH_dom_sf"/>
</dbReference>
<dbReference type="InterPro" id="IPR047290">
    <property type="entry name" value="CH_SYNE1_rpt1"/>
</dbReference>
<dbReference type="InterPro" id="IPR047291">
    <property type="entry name" value="CH_SYNE1_rpt2"/>
</dbReference>
<dbReference type="InterPro" id="IPR012315">
    <property type="entry name" value="KASH"/>
</dbReference>
<dbReference type="InterPro" id="IPR018159">
    <property type="entry name" value="Spectrin/alpha-actinin"/>
</dbReference>
<dbReference type="InterPro" id="IPR002017">
    <property type="entry name" value="Spectrin_repeat"/>
</dbReference>
<dbReference type="InterPro" id="IPR057057">
    <property type="entry name" value="Spectrin_SYNE1"/>
</dbReference>
<dbReference type="InterPro" id="IPR056887">
    <property type="entry name" value="SYNE1/2_dom"/>
</dbReference>
<dbReference type="PANTHER" id="PTHR14514:SF3">
    <property type="entry name" value="NESPRIN-1"/>
    <property type="match status" value="1"/>
</dbReference>
<dbReference type="PANTHER" id="PTHR14514">
    <property type="entry name" value="PKA ANCHORING PROTEIN"/>
    <property type="match status" value="1"/>
</dbReference>
<dbReference type="Pfam" id="PF00307">
    <property type="entry name" value="CH"/>
    <property type="match status" value="2"/>
</dbReference>
<dbReference type="Pfam" id="PF10541">
    <property type="entry name" value="KASH"/>
    <property type="match status" value="1"/>
</dbReference>
<dbReference type="Pfam" id="PF00435">
    <property type="entry name" value="Spectrin"/>
    <property type="match status" value="11"/>
</dbReference>
<dbReference type="Pfam" id="PF25034">
    <property type="entry name" value="Spectrin_SYNE1"/>
    <property type="match status" value="1"/>
</dbReference>
<dbReference type="Pfam" id="PF25035">
    <property type="entry name" value="SYNE1"/>
    <property type="match status" value="1"/>
</dbReference>
<dbReference type="SMART" id="SM00033">
    <property type="entry name" value="CH"/>
    <property type="match status" value="2"/>
</dbReference>
<dbReference type="SMART" id="SM01249">
    <property type="entry name" value="KASH"/>
    <property type="match status" value="1"/>
</dbReference>
<dbReference type="SMART" id="SM00150">
    <property type="entry name" value="SPEC"/>
    <property type="match status" value="42"/>
</dbReference>
<dbReference type="SUPFAM" id="SSF47576">
    <property type="entry name" value="Calponin-homology domain, CH-domain"/>
    <property type="match status" value="1"/>
</dbReference>
<dbReference type="SUPFAM" id="SSF46966">
    <property type="entry name" value="Spectrin repeat"/>
    <property type="match status" value="48"/>
</dbReference>
<dbReference type="PROSITE" id="PS00019">
    <property type="entry name" value="ACTININ_1"/>
    <property type="match status" value="1"/>
</dbReference>
<dbReference type="PROSITE" id="PS00020">
    <property type="entry name" value="ACTININ_2"/>
    <property type="match status" value="1"/>
</dbReference>
<dbReference type="PROSITE" id="PS50021">
    <property type="entry name" value="CH"/>
    <property type="match status" value="2"/>
</dbReference>
<dbReference type="PROSITE" id="PS51049">
    <property type="entry name" value="KASH"/>
    <property type="match status" value="1"/>
</dbReference>
<reference key="1">
    <citation type="journal article" date="2000" name="J. Biol. Chem.">
        <title>Syne-1, a dystrophin- and Klarsicht-related protein associated with synaptic nuclei at the neuromuscular junction.</title>
        <authorList>
            <person name="Apel E.D."/>
            <person name="Lewis R.M."/>
            <person name="Grady R.M."/>
            <person name="Sanes J.R."/>
        </authorList>
    </citation>
    <scope>NUCLEOTIDE SEQUENCE [MRNA] (ISOFORM 3)</scope>
    <scope>NUCLEOTIDE SEQUENCE [MRNA] OF 6808-8799 (ISOFORM 4)</scope>
    <scope>INTERACTION WITH MUSK</scope>
    <scope>SUBCELLULAR LOCATION</scope>
</reference>
<reference key="2">
    <citation type="journal article" date="2004" name="Exp. Cell Res.">
        <title>Enaptin, a giant actin-binding protein, is an element of the nuclear membrane and the actin cytoskeleton.</title>
        <authorList>
            <person name="Padmakumar V.C."/>
            <person name="Abraham S."/>
            <person name="Braune S."/>
            <person name="Noegel A.A."/>
            <person name="Tunggal B."/>
            <person name="Karakesisoglou I."/>
            <person name="Korenbaum E."/>
        </authorList>
    </citation>
    <scope>NUCLEOTIDE SEQUENCE [MRNA] (ISOFORM 5)</scope>
    <scope>TISSUE SPECIFICITY</scope>
    <scope>ACTIN-BINDING</scope>
    <scope>SUBCELLULAR LOCATION</scope>
    <source>
        <strain>BALB/cJ</strain>
        <tissue>Brain</tissue>
    </source>
</reference>
<reference key="3">
    <citation type="journal article" date="2005" name="Science">
        <title>The transcriptional landscape of the mammalian genome.</title>
        <authorList>
            <person name="Carninci P."/>
            <person name="Kasukawa T."/>
            <person name="Katayama S."/>
            <person name="Gough J."/>
            <person name="Frith M.C."/>
            <person name="Maeda N."/>
            <person name="Oyama R."/>
            <person name="Ravasi T."/>
            <person name="Lenhard B."/>
            <person name="Wells C."/>
            <person name="Kodzius R."/>
            <person name="Shimokawa K."/>
            <person name="Bajic V.B."/>
            <person name="Brenner S.E."/>
            <person name="Batalov S."/>
            <person name="Forrest A.R."/>
            <person name="Zavolan M."/>
            <person name="Davis M.J."/>
            <person name="Wilming L.G."/>
            <person name="Aidinis V."/>
            <person name="Allen J.E."/>
            <person name="Ambesi-Impiombato A."/>
            <person name="Apweiler R."/>
            <person name="Aturaliya R.N."/>
            <person name="Bailey T.L."/>
            <person name="Bansal M."/>
            <person name="Baxter L."/>
            <person name="Beisel K.W."/>
            <person name="Bersano T."/>
            <person name="Bono H."/>
            <person name="Chalk A.M."/>
            <person name="Chiu K.P."/>
            <person name="Choudhary V."/>
            <person name="Christoffels A."/>
            <person name="Clutterbuck D.R."/>
            <person name="Crowe M.L."/>
            <person name="Dalla E."/>
            <person name="Dalrymple B.P."/>
            <person name="de Bono B."/>
            <person name="Della Gatta G."/>
            <person name="di Bernardo D."/>
            <person name="Down T."/>
            <person name="Engstrom P."/>
            <person name="Fagiolini M."/>
            <person name="Faulkner G."/>
            <person name="Fletcher C.F."/>
            <person name="Fukushima T."/>
            <person name="Furuno M."/>
            <person name="Futaki S."/>
            <person name="Gariboldi M."/>
            <person name="Georgii-Hemming P."/>
            <person name="Gingeras T.R."/>
            <person name="Gojobori T."/>
            <person name="Green R.E."/>
            <person name="Gustincich S."/>
            <person name="Harbers M."/>
            <person name="Hayashi Y."/>
            <person name="Hensch T.K."/>
            <person name="Hirokawa N."/>
            <person name="Hill D."/>
            <person name="Huminiecki L."/>
            <person name="Iacono M."/>
            <person name="Ikeo K."/>
            <person name="Iwama A."/>
            <person name="Ishikawa T."/>
            <person name="Jakt M."/>
            <person name="Kanapin A."/>
            <person name="Katoh M."/>
            <person name="Kawasawa Y."/>
            <person name="Kelso J."/>
            <person name="Kitamura H."/>
            <person name="Kitano H."/>
            <person name="Kollias G."/>
            <person name="Krishnan S.P."/>
            <person name="Kruger A."/>
            <person name="Kummerfeld S.K."/>
            <person name="Kurochkin I.V."/>
            <person name="Lareau L.F."/>
            <person name="Lazarevic D."/>
            <person name="Lipovich L."/>
            <person name="Liu J."/>
            <person name="Liuni S."/>
            <person name="McWilliam S."/>
            <person name="Madan Babu M."/>
            <person name="Madera M."/>
            <person name="Marchionni L."/>
            <person name="Matsuda H."/>
            <person name="Matsuzawa S."/>
            <person name="Miki H."/>
            <person name="Mignone F."/>
            <person name="Miyake S."/>
            <person name="Morris K."/>
            <person name="Mottagui-Tabar S."/>
            <person name="Mulder N."/>
            <person name="Nakano N."/>
            <person name="Nakauchi H."/>
            <person name="Ng P."/>
            <person name="Nilsson R."/>
            <person name="Nishiguchi S."/>
            <person name="Nishikawa S."/>
            <person name="Nori F."/>
            <person name="Ohara O."/>
            <person name="Okazaki Y."/>
            <person name="Orlando V."/>
            <person name="Pang K.C."/>
            <person name="Pavan W.J."/>
            <person name="Pavesi G."/>
            <person name="Pesole G."/>
            <person name="Petrovsky N."/>
            <person name="Piazza S."/>
            <person name="Reed J."/>
            <person name="Reid J.F."/>
            <person name="Ring B.Z."/>
            <person name="Ringwald M."/>
            <person name="Rost B."/>
            <person name="Ruan Y."/>
            <person name="Salzberg S.L."/>
            <person name="Sandelin A."/>
            <person name="Schneider C."/>
            <person name="Schoenbach C."/>
            <person name="Sekiguchi K."/>
            <person name="Semple C.A."/>
            <person name="Seno S."/>
            <person name="Sessa L."/>
            <person name="Sheng Y."/>
            <person name="Shibata Y."/>
            <person name="Shimada H."/>
            <person name="Shimada K."/>
            <person name="Silva D."/>
            <person name="Sinclair B."/>
            <person name="Sperling S."/>
            <person name="Stupka E."/>
            <person name="Sugiura K."/>
            <person name="Sultana R."/>
            <person name="Takenaka Y."/>
            <person name="Taki K."/>
            <person name="Tammoja K."/>
            <person name="Tan S.L."/>
            <person name="Tang S."/>
            <person name="Taylor M.S."/>
            <person name="Tegner J."/>
            <person name="Teichmann S.A."/>
            <person name="Ueda H.R."/>
            <person name="van Nimwegen E."/>
            <person name="Verardo R."/>
            <person name="Wei C.L."/>
            <person name="Yagi K."/>
            <person name="Yamanishi H."/>
            <person name="Zabarovsky E."/>
            <person name="Zhu S."/>
            <person name="Zimmer A."/>
            <person name="Hide W."/>
            <person name="Bult C."/>
            <person name="Grimmond S.M."/>
            <person name="Teasdale R.D."/>
            <person name="Liu E.T."/>
            <person name="Brusic V."/>
            <person name="Quackenbush J."/>
            <person name="Wahlestedt C."/>
            <person name="Mattick J.S."/>
            <person name="Hume D.A."/>
            <person name="Kai C."/>
            <person name="Sasaki D."/>
            <person name="Tomaru Y."/>
            <person name="Fukuda S."/>
            <person name="Kanamori-Katayama M."/>
            <person name="Suzuki M."/>
            <person name="Aoki J."/>
            <person name="Arakawa T."/>
            <person name="Iida J."/>
            <person name="Imamura K."/>
            <person name="Itoh M."/>
            <person name="Kato T."/>
            <person name="Kawaji H."/>
            <person name="Kawagashira N."/>
            <person name="Kawashima T."/>
            <person name="Kojima M."/>
            <person name="Kondo S."/>
            <person name="Konno H."/>
            <person name="Nakano K."/>
            <person name="Ninomiya N."/>
            <person name="Nishio T."/>
            <person name="Okada M."/>
            <person name="Plessy C."/>
            <person name="Shibata K."/>
            <person name="Shiraki T."/>
            <person name="Suzuki S."/>
            <person name="Tagami M."/>
            <person name="Waki K."/>
            <person name="Watahiki A."/>
            <person name="Okamura-Oho Y."/>
            <person name="Suzuki H."/>
            <person name="Kawai J."/>
            <person name="Hayashizaki Y."/>
        </authorList>
    </citation>
    <scope>NUCLEOTIDE SEQUENCE [LARGE SCALE MRNA] (ISOFORM 2)</scope>
    <source>
        <strain>C57BL/6J</strain>
        <tissue>Vagina</tissue>
    </source>
</reference>
<reference key="4">
    <citation type="journal article" date="2009" name="PLoS Biol.">
        <title>Lineage-specific biology revealed by a finished genome assembly of the mouse.</title>
        <authorList>
            <person name="Church D.M."/>
            <person name="Goodstadt L."/>
            <person name="Hillier L.W."/>
            <person name="Zody M.C."/>
            <person name="Goldstein S."/>
            <person name="She X."/>
            <person name="Bult C.J."/>
            <person name="Agarwala R."/>
            <person name="Cherry J.L."/>
            <person name="DiCuccio M."/>
            <person name="Hlavina W."/>
            <person name="Kapustin Y."/>
            <person name="Meric P."/>
            <person name="Maglott D."/>
            <person name="Birtle Z."/>
            <person name="Marques A.C."/>
            <person name="Graves T."/>
            <person name="Zhou S."/>
            <person name="Teague B."/>
            <person name="Potamousis K."/>
            <person name="Churas C."/>
            <person name="Place M."/>
            <person name="Herschleb J."/>
            <person name="Runnheim R."/>
            <person name="Forrest D."/>
            <person name="Amos-Landgraf J."/>
            <person name="Schwartz D.C."/>
            <person name="Cheng Z."/>
            <person name="Lindblad-Toh K."/>
            <person name="Eichler E.E."/>
            <person name="Ponting C.P."/>
        </authorList>
    </citation>
    <scope>NUCLEOTIDE SEQUENCE [LARGE SCALE GENOMIC DNA]</scope>
    <source>
        <strain>C57BL/6J</strain>
    </source>
</reference>
<reference key="5">
    <citation type="journal article" date="2003" name="Science">
        <title>Nuclear membrane proteins with potential disease links found by subtractive proteomics.</title>
        <authorList>
            <person name="Schirmer E.C."/>
            <person name="Florens L."/>
            <person name="Guan T."/>
            <person name="Yates J.R. III"/>
            <person name="Gerace L."/>
        </authorList>
    </citation>
    <scope>IDENTIFICATION BY MASS SPECTROMETRY</scope>
    <scope>SUBCELLULAR LOCATION</scope>
</reference>
<reference key="6">
    <citation type="journal article" date="2006" name="Mol. Cell. Proteomics">
        <title>Comprehensive identification of phosphorylation sites in postsynaptic density preparations.</title>
        <authorList>
            <person name="Trinidad J.C."/>
            <person name="Specht C.G."/>
            <person name="Thalhammer A."/>
            <person name="Schoepfer R."/>
            <person name="Burlingame A.L."/>
        </authorList>
    </citation>
    <scope>PHOSPHORYLATION [LARGE SCALE ANALYSIS] AT SER-8308</scope>
    <scope>IDENTIFICATION BY MASS SPECTROMETRY [LARGE SCALE ANALYSIS]</scope>
    <source>
        <tissue>Brain</tissue>
    </source>
</reference>
<reference key="7">
    <citation type="journal article" date="2009" name="J. Cell Sci.">
        <title>Nesprin-2 interacts with meckelin and mediates ciliogenesis via remodelling of the actin cytoskeleton.</title>
        <authorList>
            <person name="Dawe H.R."/>
            <person name="Adams M."/>
            <person name="Wheway G."/>
            <person name="Szymanska K."/>
            <person name="Logan C.V."/>
            <person name="Noegel A.A."/>
            <person name="Gull K."/>
            <person name="Johnson C.A."/>
        </authorList>
    </citation>
    <scope>FUNCTION</scope>
</reference>
<reference key="8">
    <citation type="journal article" date="2009" name="Neuron">
        <title>SUN1/2 and Syne/Nesprin-1/2 complexes connect centrosome to the nucleus during neurogenesis and neuronal migration in mice.</title>
        <authorList>
            <person name="Zhang X."/>
            <person name="Lei K."/>
            <person name="Yuan X."/>
            <person name="Wu X."/>
            <person name="Zhuang Y."/>
            <person name="Xu T."/>
            <person name="Xu R."/>
            <person name="Han M."/>
        </authorList>
    </citation>
    <scope>FUNCTION</scope>
    <scope>SUBUNIT</scope>
</reference>
<reference key="9">
    <citation type="journal article" date="2009" name="Proc. Natl. Acad. Sci. U.S.A.">
        <title>SUN1 and SUN2 play critical but partially redundant roles in anchoring nuclei in skeletal muscle cells in mice.</title>
        <authorList>
            <person name="Lei K."/>
            <person name="Zhang X."/>
            <person name="Ding X."/>
            <person name="Guo X."/>
            <person name="Chen M."/>
            <person name="Zhu B."/>
            <person name="Xu T."/>
            <person name="Zhuang Y."/>
            <person name="Xu R."/>
            <person name="Han M."/>
        </authorList>
    </citation>
    <scope>SUBCELLULAR LOCATION</scope>
</reference>
<reference key="10">
    <citation type="journal article" date="2010" name="Cell">
        <title>A tissue-specific atlas of mouse protein phosphorylation and expression.</title>
        <authorList>
            <person name="Huttlin E.L."/>
            <person name="Jedrychowski M.P."/>
            <person name="Elias J.E."/>
            <person name="Goswami T."/>
            <person name="Rad R."/>
            <person name="Beausoleil S.A."/>
            <person name="Villen J."/>
            <person name="Haas W."/>
            <person name="Sowa M.E."/>
            <person name="Gygi S.P."/>
        </authorList>
    </citation>
    <scope>PHOSPHORYLATION [LARGE SCALE ANALYSIS] AT SER-732; THR-2268; SER-5655; THR-8278; SER-8284 AND THR-8363</scope>
    <scope>PHOSPHORYLATION [LARGE SCALE ANALYSIS] AT SER-377 (ISOFORMS 2 AND 3)</scope>
    <scope>PHOSPHORYLATION [LARGE SCALE ANALYSIS] AT SER-8225 (ISOFORM 4)</scope>
    <scope>IDENTIFICATION BY MASS SPECTROMETRY [LARGE SCALE ANALYSIS]</scope>
    <source>
        <tissue>Brain</tissue>
        <tissue>Heart</tissue>
        <tissue>Kidney</tissue>
        <tissue>Liver</tissue>
        <tissue>Lung</tissue>
        <tissue>Pancreas</tissue>
        <tissue>Spleen</tissue>
        <tissue>Testis</tissue>
    </source>
</reference>
<reference key="11">
    <citation type="journal article" date="2012" name="Int. J. Cell Biol.">
        <title>Cytoskeletal interactions at the nuclear envelope mediated by nesprins.</title>
        <authorList>
            <person name="Taranum S."/>
            <person name="Sur I."/>
            <person name="Muller R."/>
            <person name="Lu W."/>
            <person name="Rashmi R.N."/>
            <person name="Munck M."/>
            <person name="Neumann S."/>
            <person name="Karakesisoglou I."/>
            <person name="Noegel A.A."/>
        </authorList>
    </citation>
    <scope>SELF-ASSOCIATION</scope>
    <scope>INTERACTION WITH SYNE3</scope>
    <scope>TISSUE SPECIFICITY</scope>
</reference>
<reference key="12">
    <citation type="journal article" date="2015" name="Biol. Open">
        <title>The LINC complex component Sun4 plays a crucial role in sperm head formation and fertility.</title>
        <authorList>
            <person name="Pasch E."/>
            <person name="Link J."/>
            <person name="Beck C."/>
            <person name="Scheuerle S."/>
            <person name="Alsheimer M."/>
        </authorList>
    </citation>
    <scope>INTERACTION WITH SPAG4</scope>
</reference>
<protein>
    <recommendedName>
        <fullName evidence="17">Nesprin-1</fullName>
    </recommendedName>
    <alternativeName>
        <fullName>Enaptin</fullName>
    </alternativeName>
    <alternativeName>
        <fullName>KASH domain-containing protein 1</fullName>
        <shortName>KASH1</shortName>
    </alternativeName>
    <alternativeName>
        <fullName>Myocyte nuclear envelope protein 1</fullName>
        <shortName>Myne-1</shortName>
    </alternativeName>
    <alternativeName>
        <fullName>Nuclear envelope spectrin repeat protein 1</fullName>
    </alternativeName>
    <alternativeName>
        <fullName>Synaptic nuclear envelope protein 1</fullName>
        <shortName>Syne-1</shortName>
    </alternativeName>
</protein>